<name>MCRG_METVO</name>
<keyword id="KW-0963">Cytoplasm</keyword>
<keyword id="KW-0484">Methanogenesis</keyword>
<keyword id="KW-0808">Transferase</keyword>
<gene>
    <name type="primary">mcrG</name>
</gene>
<comment type="function">
    <text evidence="1">Component of the methyl-coenzyme M reductase (MCR) I that catalyzes the reductive cleavage of methyl-coenzyme M (CoM-S-CH3 or 2-(methylthio)ethanesulfonate) using coenzyme B (CoB or 7-mercaptoheptanoylthreonine phosphate) as reductant which results in the production of methane and the mixed heterodisulfide of CoB and CoM (CoM-S-S-CoB). This is the final step in methanogenesis.</text>
</comment>
<comment type="catalytic activity">
    <reaction evidence="1">
        <text>coenzyme B + methyl-coenzyme M = methane + coenzyme M-coenzyme B heterodisulfide</text>
        <dbReference type="Rhea" id="RHEA:12532"/>
        <dbReference type="ChEBI" id="CHEBI:16183"/>
        <dbReference type="ChEBI" id="CHEBI:58286"/>
        <dbReference type="ChEBI" id="CHEBI:58411"/>
        <dbReference type="ChEBI" id="CHEBI:58596"/>
        <dbReference type="EC" id="2.8.4.1"/>
    </reaction>
    <physiologicalReaction direction="left-to-right" evidence="1">
        <dbReference type="Rhea" id="RHEA:12533"/>
    </physiologicalReaction>
</comment>
<comment type="cofactor">
    <cofactor evidence="1">
        <name>coenzyme F430</name>
        <dbReference type="ChEBI" id="CHEBI:60540"/>
    </cofactor>
    <text evidence="1">Binds 2 coenzyme F430 non-covalently per MCR complex. Coenzyme F430 is a yellow nickel porphinoid. Methyl-coenzyme-M reductase is activated when the enzyme-bound coenzyme F430 is reduced to the Ni(I) oxidation state.</text>
</comment>
<comment type="pathway">
    <text evidence="1">One-carbon metabolism; methyl-coenzyme M reduction; methane from methyl-coenzyme M: step 1/1.</text>
</comment>
<comment type="subunit">
    <text evidence="1">MCR is a hexamer of two alpha, two beta, and two gamma chains, forming a dimer of heterotrimers.</text>
</comment>
<comment type="subcellular location">
    <subcellularLocation>
        <location evidence="1">Cytoplasm</location>
    </subcellularLocation>
</comment>
<comment type="similarity">
    <text evidence="2">Belongs to the methyl-coenzyme M reductase gamma subunit family.</text>
</comment>
<protein>
    <recommendedName>
        <fullName>Methyl-coenzyme M reductase subunit gamma</fullName>
        <ecNumber evidence="1">2.8.4.1</ecNumber>
    </recommendedName>
    <alternativeName>
        <fullName>Coenzyme-B sulfoethylthiotransferase gamma</fullName>
    </alternativeName>
</protein>
<reference key="1">
    <citation type="journal article" date="1988" name="Mol. Gen. Genet.">
        <title>Comparative analysis of genes encoding methyl coenzyme M reductase in methanogenic bacteria.</title>
        <authorList>
            <person name="Klein A."/>
            <person name="Allmansberger R."/>
            <person name="Bokranz M."/>
            <person name="Knaub S."/>
            <person name="Mueller B."/>
            <person name="Muth E."/>
        </authorList>
    </citation>
    <scope>NUCLEOTIDE SEQUENCE [GENOMIC DNA]</scope>
    <source>
        <strain>ATCC 33273 / DSM 1537 / NBRC 100457 / OCM 70 / PS</strain>
    </source>
</reference>
<feature type="chain" id="PRO_0000147484" description="Methyl-coenzyme M reductase subunit gamma">
    <location>
        <begin position="1"/>
        <end position="261"/>
    </location>
</feature>
<feature type="binding site" evidence="1">
    <location>
        <position position="123"/>
    </location>
    <ligand>
        <name>coenzyme M</name>
        <dbReference type="ChEBI" id="CHEBI:58319"/>
    </ligand>
</feature>
<sequence length="261" mass="30132">MAYKPQFYPSATKVAENRRNHINPAFELEKLREIPDEDVVKIMGHRQPSEDYKTVHPPLEEMDLAEDYVRDLVGPINGAKEGHRIRYIQFADSMYFAPSQPYDRSRLYMSRFRGVDCGTLSGRQVVELRESNLEDISKNYLVDTELFDPATTGMRGATVHGHSLRLDENGVMFDALQRYEFDEATGHILYVKDQVGRPWDEPVDVGEPVPQEKLKEITTIYRKDGVAMRDDMEVVEVVKRIHRARTLGGYCPLNEIFDTYL</sequence>
<proteinExistence type="inferred from homology"/>
<organism>
    <name type="scientific">Methanococcus voltae</name>
    <dbReference type="NCBI Taxonomy" id="2188"/>
    <lineage>
        <taxon>Archaea</taxon>
        <taxon>Methanobacteriati</taxon>
        <taxon>Methanobacteriota</taxon>
        <taxon>Methanomada group</taxon>
        <taxon>Methanococci</taxon>
        <taxon>Methanococcales</taxon>
        <taxon>Methanococcaceae</taxon>
        <taxon>Methanococcus</taxon>
    </lineage>
</organism>
<evidence type="ECO:0000250" key="1">
    <source>
        <dbReference type="UniProtKB" id="P11562"/>
    </source>
</evidence>
<evidence type="ECO:0000305" key="2"/>
<dbReference type="EC" id="2.8.4.1" evidence="1"/>
<dbReference type="EMBL" id="X07793">
    <property type="protein sequence ID" value="CAA30632.1"/>
    <property type="molecule type" value="Genomic_DNA"/>
</dbReference>
<dbReference type="PIR" id="S03260">
    <property type="entry name" value="S03260"/>
</dbReference>
<dbReference type="SMR" id="P11563"/>
<dbReference type="UniPathway" id="UPA00646">
    <property type="reaction ID" value="UER00699"/>
</dbReference>
<dbReference type="GO" id="GO:0005737">
    <property type="term" value="C:cytoplasm"/>
    <property type="evidence" value="ECO:0007669"/>
    <property type="project" value="UniProtKB-SubCell"/>
</dbReference>
<dbReference type="GO" id="GO:0050524">
    <property type="term" value="F:coenzyme-B sulfoethylthiotransferase activity"/>
    <property type="evidence" value="ECO:0007669"/>
    <property type="project" value="UniProtKB-EC"/>
</dbReference>
<dbReference type="GO" id="GO:0015948">
    <property type="term" value="P:methanogenesis"/>
    <property type="evidence" value="ECO:0007669"/>
    <property type="project" value="UniProtKB-KW"/>
</dbReference>
<dbReference type="Gene3D" id="3.90.320.20">
    <property type="entry name" value="Methyl-coenzyme M reductase, gamma subunit"/>
    <property type="match status" value="1"/>
</dbReference>
<dbReference type="InterPro" id="IPR009024">
    <property type="entry name" value="Me_CoM_Rdtase_Fd-like_fold"/>
</dbReference>
<dbReference type="InterPro" id="IPR003178">
    <property type="entry name" value="Me_CoM_Rdtase_gsu"/>
</dbReference>
<dbReference type="InterPro" id="IPR036994">
    <property type="entry name" value="Me_CoM_Rdtase_gsu_sf"/>
</dbReference>
<dbReference type="NCBIfam" id="TIGR03259">
    <property type="entry name" value="met_CoM_red_gam"/>
    <property type="match status" value="1"/>
</dbReference>
<dbReference type="Pfam" id="PF02240">
    <property type="entry name" value="MCR_gamma"/>
    <property type="match status" value="1"/>
</dbReference>
<dbReference type="PIRSF" id="PIRSF000264">
    <property type="entry name" value="Meth_CoM_rd_gama"/>
    <property type="match status" value="1"/>
</dbReference>
<dbReference type="SUPFAM" id="SSF55088">
    <property type="entry name" value="Methyl-coenzyme M reductase subunits"/>
    <property type="match status" value="1"/>
</dbReference>
<accession>P11563</accession>